<protein>
    <recommendedName>
        <fullName evidence="1">Ribonuclease PH</fullName>
        <shortName evidence="1">RNase PH</shortName>
        <ecNumber evidence="1">2.7.7.56</ecNumber>
    </recommendedName>
    <alternativeName>
        <fullName evidence="1">tRNA nucleotidyltransferase</fullName>
    </alternativeName>
</protein>
<accession>A4XI64</accession>
<feature type="chain" id="PRO_1000024794" description="Ribonuclease PH">
    <location>
        <begin position="1"/>
        <end position="258"/>
    </location>
</feature>
<feature type="binding site" evidence="1">
    <location>
        <position position="86"/>
    </location>
    <ligand>
        <name>phosphate</name>
        <dbReference type="ChEBI" id="CHEBI:43474"/>
        <note>substrate</note>
    </ligand>
</feature>
<feature type="binding site" evidence="1">
    <location>
        <begin position="124"/>
        <end position="126"/>
    </location>
    <ligand>
        <name>phosphate</name>
        <dbReference type="ChEBI" id="CHEBI:43474"/>
        <note>substrate</note>
    </ligand>
</feature>
<gene>
    <name evidence="1" type="primary">rph</name>
    <name type="ordered locus">Csac_0985</name>
</gene>
<sequence>MRQDQRSYNELRPIKITRNFIKYAEGSCLIEMGNTKVIITATIDDKVPPFKKGSGEGWITAEYSMLPRATQQRNVRDINKLRLSGRSHEIQRLIGRALRAGINFKALGERVIILDCDVIQADGGTRTASITGGFIAMFDACKKLYDDKVIENFPITDFVAAVSVGICDGVEMLDLCFEEDSKASVDMNLVMNDKGEFIEIQGTAEGGAFTQEQFEKLLELGKQGIQKIIEIQREVLGEDSKLIGSVPKDEKTSGCDQE</sequence>
<proteinExistence type="inferred from homology"/>
<keyword id="KW-0548">Nucleotidyltransferase</keyword>
<keyword id="KW-0694">RNA-binding</keyword>
<keyword id="KW-0698">rRNA processing</keyword>
<keyword id="KW-0808">Transferase</keyword>
<keyword id="KW-0819">tRNA processing</keyword>
<keyword id="KW-0820">tRNA-binding</keyword>
<dbReference type="EC" id="2.7.7.56" evidence="1"/>
<dbReference type="EMBL" id="CP000679">
    <property type="protein sequence ID" value="ABP66599.1"/>
    <property type="molecule type" value="Genomic_DNA"/>
</dbReference>
<dbReference type="RefSeq" id="WP_011916545.1">
    <property type="nucleotide sequence ID" value="NC_009437.1"/>
</dbReference>
<dbReference type="SMR" id="A4XI64"/>
<dbReference type="STRING" id="351627.Csac_0985"/>
<dbReference type="KEGG" id="csc:Csac_0985"/>
<dbReference type="eggNOG" id="COG0689">
    <property type="taxonomic scope" value="Bacteria"/>
</dbReference>
<dbReference type="HOGENOM" id="CLU_050858_0_0_9"/>
<dbReference type="OrthoDB" id="9807456at2"/>
<dbReference type="Proteomes" id="UP000000256">
    <property type="component" value="Chromosome"/>
</dbReference>
<dbReference type="GO" id="GO:0000175">
    <property type="term" value="F:3'-5'-RNA exonuclease activity"/>
    <property type="evidence" value="ECO:0007669"/>
    <property type="project" value="UniProtKB-UniRule"/>
</dbReference>
<dbReference type="GO" id="GO:0000049">
    <property type="term" value="F:tRNA binding"/>
    <property type="evidence" value="ECO:0007669"/>
    <property type="project" value="UniProtKB-UniRule"/>
</dbReference>
<dbReference type="GO" id="GO:0009022">
    <property type="term" value="F:tRNA nucleotidyltransferase activity"/>
    <property type="evidence" value="ECO:0007669"/>
    <property type="project" value="UniProtKB-UniRule"/>
</dbReference>
<dbReference type="GO" id="GO:0016075">
    <property type="term" value="P:rRNA catabolic process"/>
    <property type="evidence" value="ECO:0007669"/>
    <property type="project" value="UniProtKB-UniRule"/>
</dbReference>
<dbReference type="GO" id="GO:0006364">
    <property type="term" value="P:rRNA processing"/>
    <property type="evidence" value="ECO:0007669"/>
    <property type="project" value="UniProtKB-KW"/>
</dbReference>
<dbReference type="GO" id="GO:0008033">
    <property type="term" value="P:tRNA processing"/>
    <property type="evidence" value="ECO:0007669"/>
    <property type="project" value="UniProtKB-UniRule"/>
</dbReference>
<dbReference type="CDD" id="cd11362">
    <property type="entry name" value="RNase_PH_bact"/>
    <property type="match status" value="1"/>
</dbReference>
<dbReference type="FunFam" id="3.30.230.70:FF:000003">
    <property type="entry name" value="Ribonuclease PH"/>
    <property type="match status" value="1"/>
</dbReference>
<dbReference type="Gene3D" id="3.30.230.70">
    <property type="entry name" value="GHMP Kinase, N-terminal domain"/>
    <property type="match status" value="1"/>
</dbReference>
<dbReference type="HAMAP" id="MF_00564">
    <property type="entry name" value="RNase_PH"/>
    <property type="match status" value="1"/>
</dbReference>
<dbReference type="InterPro" id="IPR001247">
    <property type="entry name" value="ExoRNase_PH_dom1"/>
</dbReference>
<dbReference type="InterPro" id="IPR015847">
    <property type="entry name" value="ExoRNase_PH_dom2"/>
</dbReference>
<dbReference type="InterPro" id="IPR036345">
    <property type="entry name" value="ExoRNase_PH_dom2_sf"/>
</dbReference>
<dbReference type="InterPro" id="IPR027408">
    <property type="entry name" value="PNPase/RNase_PH_dom_sf"/>
</dbReference>
<dbReference type="InterPro" id="IPR020568">
    <property type="entry name" value="Ribosomal_Su5_D2-typ_SF"/>
</dbReference>
<dbReference type="InterPro" id="IPR050080">
    <property type="entry name" value="RNase_PH"/>
</dbReference>
<dbReference type="InterPro" id="IPR002381">
    <property type="entry name" value="RNase_PH_bac-type"/>
</dbReference>
<dbReference type="InterPro" id="IPR018336">
    <property type="entry name" value="RNase_PH_CS"/>
</dbReference>
<dbReference type="NCBIfam" id="TIGR01966">
    <property type="entry name" value="RNasePH"/>
    <property type="match status" value="1"/>
</dbReference>
<dbReference type="PANTHER" id="PTHR11953">
    <property type="entry name" value="EXOSOME COMPLEX COMPONENT"/>
    <property type="match status" value="1"/>
</dbReference>
<dbReference type="PANTHER" id="PTHR11953:SF0">
    <property type="entry name" value="EXOSOME COMPLEX COMPONENT RRP41"/>
    <property type="match status" value="1"/>
</dbReference>
<dbReference type="Pfam" id="PF01138">
    <property type="entry name" value="RNase_PH"/>
    <property type="match status" value="1"/>
</dbReference>
<dbReference type="Pfam" id="PF03725">
    <property type="entry name" value="RNase_PH_C"/>
    <property type="match status" value="1"/>
</dbReference>
<dbReference type="SUPFAM" id="SSF55666">
    <property type="entry name" value="Ribonuclease PH domain 2-like"/>
    <property type="match status" value="1"/>
</dbReference>
<dbReference type="SUPFAM" id="SSF54211">
    <property type="entry name" value="Ribosomal protein S5 domain 2-like"/>
    <property type="match status" value="1"/>
</dbReference>
<dbReference type="PROSITE" id="PS01277">
    <property type="entry name" value="RIBONUCLEASE_PH"/>
    <property type="match status" value="1"/>
</dbReference>
<comment type="function">
    <text evidence="1">Phosphorolytic 3'-5' exoribonuclease that plays an important role in tRNA 3'-end maturation. Removes nucleotide residues following the 3'-CCA terminus of tRNAs; can also add nucleotides to the ends of RNA molecules by using nucleoside diphosphates as substrates, but this may not be physiologically important. Probably plays a role in initiation of 16S rRNA degradation (leading to ribosome degradation) during starvation.</text>
</comment>
<comment type="catalytic activity">
    <reaction evidence="1">
        <text>tRNA(n+1) + phosphate = tRNA(n) + a ribonucleoside 5'-diphosphate</text>
        <dbReference type="Rhea" id="RHEA:10628"/>
        <dbReference type="Rhea" id="RHEA-COMP:17343"/>
        <dbReference type="Rhea" id="RHEA-COMP:17344"/>
        <dbReference type="ChEBI" id="CHEBI:43474"/>
        <dbReference type="ChEBI" id="CHEBI:57930"/>
        <dbReference type="ChEBI" id="CHEBI:173114"/>
        <dbReference type="EC" id="2.7.7.56"/>
    </reaction>
</comment>
<comment type="subunit">
    <text evidence="1">Homohexameric ring arranged as a trimer of dimers.</text>
</comment>
<comment type="similarity">
    <text evidence="1">Belongs to the RNase PH family.</text>
</comment>
<evidence type="ECO:0000255" key="1">
    <source>
        <dbReference type="HAMAP-Rule" id="MF_00564"/>
    </source>
</evidence>
<organism>
    <name type="scientific">Caldicellulosiruptor saccharolyticus (strain ATCC 43494 / DSM 8903 / Tp8T 6331)</name>
    <dbReference type="NCBI Taxonomy" id="351627"/>
    <lineage>
        <taxon>Bacteria</taxon>
        <taxon>Bacillati</taxon>
        <taxon>Bacillota</taxon>
        <taxon>Bacillota incertae sedis</taxon>
        <taxon>Caldicellulosiruptorales</taxon>
        <taxon>Caldicellulosiruptoraceae</taxon>
        <taxon>Caldicellulosiruptor</taxon>
    </lineage>
</organism>
<reference key="1">
    <citation type="submission" date="2007-04" db="EMBL/GenBank/DDBJ databases">
        <title>Genome sequence of the thermophilic hydrogen-producing bacterium Caldicellulosiruptor saccharolyticus DSM 8903.</title>
        <authorList>
            <person name="Copeland A."/>
            <person name="Lucas S."/>
            <person name="Lapidus A."/>
            <person name="Barry K."/>
            <person name="Detter J.C."/>
            <person name="Glavina del Rio T."/>
            <person name="Hammon N."/>
            <person name="Israni S."/>
            <person name="Dalin E."/>
            <person name="Tice H."/>
            <person name="Pitluck S."/>
            <person name="Kiss H."/>
            <person name="Brettin T."/>
            <person name="Bruce D."/>
            <person name="Han C."/>
            <person name="Schmutz J."/>
            <person name="Larimer F."/>
            <person name="Land M."/>
            <person name="Hauser L."/>
            <person name="Kyrpides N."/>
            <person name="Lykidis A."/>
            <person name="van de Werken H.J.G."/>
            <person name="Verhaart M.R.A."/>
            <person name="VanFossen A.L."/>
            <person name="Lewis D.L."/>
            <person name="Nichols J.D."/>
            <person name="Goorissen H.P."/>
            <person name="van Niel E.W.J."/>
            <person name="Stams F.J.M."/>
            <person name="Willquist K.U."/>
            <person name="Ward D.E."/>
            <person name="van der Oost J."/>
            <person name="Kelly R.M."/>
            <person name="Kengen S.M.W."/>
            <person name="Richardson P."/>
        </authorList>
    </citation>
    <scope>NUCLEOTIDE SEQUENCE [LARGE SCALE GENOMIC DNA]</scope>
    <source>
        <strain>ATCC 43494 / DSM 8903 / Tp8T 6331</strain>
    </source>
</reference>
<name>RNPH_CALS8</name>